<dbReference type="EMBL" id="AE017143">
    <property type="protein sequence ID" value="AAP95036.1"/>
    <property type="molecule type" value="Genomic_DNA"/>
</dbReference>
<dbReference type="RefSeq" id="WP_010944090.1">
    <property type="nucleotide sequence ID" value="NC_002940.2"/>
</dbReference>
<dbReference type="SMR" id="Q7VPN8"/>
<dbReference type="STRING" id="233412.HD_0013"/>
<dbReference type="KEGG" id="hdu:HD_0013"/>
<dbReference type="eggNOG" id="COG4974">
    <property type="taxonomic scope" value="Bacteria"/>
</dbReference>
<dbReference type="HOGENOM" id="CLU_027562_9_0_6"/>
<dbReference type="OrthoDB" id="9801717at2"/>
<dbReference type="Proteomes" id="UP000001022">
    <property type="component" value="Chromosome"/>
</dbReference>
<dbReference type="GO" id="GO:0005737">
    <property type="term" value="C:cytoplasm"/>
    <property type="evidence" value="ECO:0007669"/>
    <property type="project" value="UniProtKB-SubCell"/>
</dbReference>
<dbReference type="GO" id="GO:0003677">
    <property type="term" value="F:DNA binding"/>
    <property type="evidence" value="ECO:0007669"/>
    <property type="project" value="UniProtKB-KW"/>
</dbReference>
<dbReference type="GO" id="GO:0009037">
    <property type="term" value="F:tyrosine-based site-specific recombinase activity"/>
    <property type="evidence" value="ECO:0007669"/>
    <property type="project" value="UniProtKB-UniRule"/>
</dbReference>
<dbReference type="GO" id="GO:0051301">
    <property type="term" value="P:cell division"/>
    <property type="evidence" value="ECO:0007669"/>
    <property type="project" value="UniProtKB-KW"/>
</dbReference>
<dbReference type="GO" id="GO:0007059">
    <property type="term" value="P:chromosome segregation"/>
    <property type="evidence" value="ECO:0007669"/>
    <property type="project" value="UniProtKB-UniRule"/>
</dbReference>
<dbReference type="GO" id="GO:0006313">
    <property type="term" value="P:DNA transposition"/>
    <property type="evidence" value="ECO:0007669"/>
    <property type="project" value="UniProtKB-UniRule"/>
</dbReference>
<dbReference type="CDD" id="cd00798">
    <property type="entry name" value="INT_XerDC_C"/>
    <property type="match status" value="1"/>
</dbReference>
<dbReference type="Gene3D" id="1.10.150.130">
    <property type="match status" value="1"/>
</dbReference>
<dbReference type="Gene3D" id="1.10.443.10">
    <property type="entry name" value="Intergrase catalytic core"/>
    <property type="match status" value="1"/>
</dbReference>
<dbReference type="HAMAP" id="MF_01808">
    <property type="entry name" value="Recomb_XerC_XerD"/>
    <property type="match status" value="1"/>
</dbReference>
<dbReference type="HAMAP" id="MF_01807">
    <property type="entry name" value="Recomb_XerD"/>
    <property type="match status" value="1"/>
</dbReference>
<dbReference type="InterPro" id="IPR044068">
    <property type="entry name" value="CB"/>
</dbReference>
<dbReference type="InterPro" id="IPR011010">
    <property type="entry name" value="DNA_brk_join_enz"/>
</dbReference>
<dbReference type="InterPro" id="IPR013762">
    <property type="entry name" value="Integrase-like_cat_sf"/>
</dbReference>
<dbReference type="InterPro" id="IPR002104">
    <property type="entry name" value="Integrase_catalytic"/>
</dbReference>
<dbReference type="InterPro" id="IPR010998">
    <property type="entry name" value="Integrase_recombinase_N"/>
</dbReference>
<dbReference type="InterPro" id="IPR004107">
    <property type="entry name" value="Integrase_SAM-like_N"/>
</dbReference>
<dbReference type="InterPro" id="IPR011932">
    <property type="entry name" value="Recomb_XerD"/>
</dbReference>
<dbReference type="InterPro" id="IPR023009">
    <property type="entry name" value="Tyrosine_recombinase_XerC/XerD"/>
</dbReference>
<dbReference type="InterPro" id="IPR050090">
    <property type="entry name" value="Tyrosine_recombinase_XerCD"/>
</dbReference>
<dbReference type="NCBIfam" id="NF001399">
    <property type="entry name" value="PRK00283.1"/>
    <property type="match status" value="1"/>
</dbReference>
<dbReference type="NCBIfam" id="NF040815">
    <property type="entry name" value="recomb_XerA_Arch"/>
    <property type="match status" value="1"/>
</dbReference>
<dbReference type="NCBIfam" id="TIGR02225">
    <property type="entry name" value="recomb_XerD"/>
    <property type="match status" value="1"/>
</dbReference>
<dbReference type="PANTHER" id="PTHR30349">
    <property type="entry name" value="PHAGE INTEGRASE-RELATED"/>
    <property type="match status" value="1"/>
</dbReference>
<dbReference type="PANTHER" id="PTHR30349:SF90">
    <property type="entry name" value="TYROSINE RECOMBINASE XERD"/>
    <property type="match status" value="1"/>
</dbReference>
<dbReference type="Pfam" id="PF02899">
    <property type="entry name" value="Phage_int_SAM_1"/>
    <property type="match status" value="1"/>
</dbReference>
<dbReference type="Pfam" id="PF00589">
    <property type="entry name" value="Phage_integrase"/>
    <property type="match status" value="1"/>
</dbReference>
<dbReference type="SUPFAM" id="SSF56349">
    <property type="entry name" value="DNA breaking-rejoining enzymes"/>
    <property type="match status" value="1"/>
</dbReference>
<dbReference type="SUPFAM" id="SSF47823">
    <property type="entry name" value="lambda integrase-like, N-terminal domain"/>
    <property type="match status" value="1"/>
</dbReference>
<dbReference type="PROSITE" id="PS51900">
    <property type="entry name" value="CB"/>
    <property type="match status" value="1"/>
</dbReference>
<dbReference type="PROSITE" id="PS51898">
    <property type="entry name" value="TYR_RECOMBINASE"/>
    <property type="match status" value="1"/>
</dbReference>
<proteinExistence type="inferred from homology"/>
<feature type="chain" id="PRO_0000095389" description="Tyrosine recombinase XerD">
    <location>
        <begin position="1"/>
        <end position="297"/>
    </location>
</feature>
<feature type="domain" description="Core-binding (CB)" evidence="3">
    <location>
        <begin position="2"/>
        <end position="86"/>
    </location>
</feature>
<feature type="domain" description="Tyr recombinase" evidence="2">
    <location>
        <begin position="107"/>
        <end position="291"/>
    </location>
</feature>
<feature type="active site" evidence="1">
    <location>
        <position position="147"/>
    </location>
</feature>
<feature type="active site" evidence="1">
    <location>
        <position position="171"/>
    </location>
</feature>
<feature type="active site" evidence="1">
    <location>
        <position position="243"/>
    </location>
</feature>
<feature type="active site" evidence="1">
    <location>
        <position position="246"/>
    </location>
</feature>
<feature type="active site" evidence="1">
    <location>
        <position position="269"/>
    </location>
</feature>
<feature type="active site" description="O-(3'-phospho-DNA)-tyrosine intermediate" evidence="1">
    <location>
        <position position="278"/>
    </location>
</feature>
<accession>Q7VPN8</accession>
<sequence>MKKLDPIIEQFLDTLWLEQSLSHNTLLSYRLDLELFSAWLVEPRAFLTLTHTDLQLFLGDRLDKGYKSSSSARIISCLRKFFRFLCLEKYRLDDPTSMLISPRKRVQLPKSLSEEQVMDLLDAPNPLDPIELRDKAMLELLYATGLRVTELISLTIDNLNLRQGVVRVIGKGDKERLVPIGEEASYWIQEFFDYGRMILLSDQQSDVLFPSRRAKQMTRQTFWHRIKYYAILAGIDAEKLSPHVLRHAFATHLINHGADLRVVQMLLGHSDLSTTQIYTHVAKTRLKSIHKQFHPRG</sequence>
<keyword id="KW-0131">Cell cycle</keyword>
<keyword id="KW-0132">Cell division</keyword>
<keyword id="KW-0159">Chromosome partition</keyword>
<keyword id="KW-0963">Cytoplasm</keyword>
<keyword id="KW-0229">DNA integration</keyword>
<keyword id="KW-0233">DNA recombination</keyword>
<keyword id="KW-0238">DNA-binding</keyword>
<keyword id="KW-1185">Reference proteome</keyword>
<evidence type="ECO:0000255" key="1">
    <source>
        <dbReference type="HAMAP-Rule" id="MF_01807"/>
    </source>
</evidence>
<evidence type="ECO:0000255" key="2">
    <source>
        <dbReference type="PROSITE-ProRule" id="PRU01246"/>
    </source>
</evidence>
<evidence type="ECO:0000255" key="3">
    <source>
        <dbReference type="PROSITE-ProRule" id="PRU01248"/>
    </source>
</evidence>
<reference key="1">
    <citation type="submission" date="2003-06" db="EMBL/GenBank/DDBJ databases">
        <title>The complete genome sequence of Haemophilus ducreyi.</title>
        <authorList>
            <person name="Munson R.S. Jr."/>
            <person name="Ray W.C."/>
            <person name="Mahairas G."/>
            <person name="Sabo P."/>
            <person name="Mungur R."/>
            <person name="Johnson L."/>
            <person name="Nguyen D."/>
            <person name="Wang J."/>
            <person name="Forst C."/>
            <person name="Hood L."/>
        </authorList>
    </citation>
    <scope>NUCLEOTIDE SEQUENCE [LARGE SCALE GENOMIC DNA]</scope>
    <source>
        <strain>35000HP / ATCC 700724</strain>
    </source>
</reference>
<name>XERD_HAEDU</name>
<protein>
    <recommendedName>
        <fullName evidence="1">Tyrosine recombinase XerD</fullName>
    </recommendedName>
</protein>
<gene>
    <name evidence="1" type="primary">xerD</name>
    <name type="ordered locus">HD_0013</name>
</gene>
<comment type="function">
    <text evidence="1">Site-specific tyrosine recombinase, which acts by catalyzing the cutting and rejoining of the recombining DNA molecules. The XerC-XerD complex is essential to convert dimers of the bacterial chromosome into monomers to permit their segregation at cell division. It also contributes to the segregational stability of plasmids.</text>
</comment>
<comment type="subunit">
    <text evidence="1">Forms a cyclic heterotetrameric complex composed of two molecules of XerC and two molecules of XerD.</text>
</comment>
<comment type="subcellular location">
    <subcellularLocation>
        <location evidence="1">Cytoplasm</location>
    </subcellularLocation>
</comment>
<comment type="similarity">
    <text evidence="1">Belongs to the 'phage' integrase family. XerD subfamily.</text>
</comment>
<organism>
    <name type="scientific">Haemophilus ducreyi (strain 35000HP / ATCC 700724)</name>
    <dbReference type="NCBI Taxonomy" id="233412"/>
    <lineage>
        <taxon>Bacteria</taxon>
        <taxon>Pseudomonadati</taxon>
        <taxon>Pseudomonadota</taxon>
        <taxon>Gammaproteobacteria</taxon>
        <taxon>Pasteurellales</taxon>
        <taxon>Pasteurellaceae</taxon>
        <taxon>Haemophilus</taxon>
    </lineage>
</organism>